<proteinExistence type="inferred from homology"/>
<dbReference type="EMBL" id="AP008934">
    <property type="protein sequence ID" value="BAE19588.1"/>
    <property type="molecule type" value="Genomic_DNA"/>
</dbReference>
<dbReference type="RefSeq" id="WP_002481959.1">
    <property type="nucleotide sequence ID" value="NZ_MTGA01000035.1"/>
</dbReference>
<dbReference type="SMR" id="Q49UI5"/>
<dbReference type="GeneID" id="3617216"/>
<dbReference type="KEGG" id="ssp:SSP2443"/>
<dbReference type="PATRIC" id="fig|342451.11.peg.2426"/>
<dbReference type="eggNOG" id="COG0445">
    <property type="taxonomic scope" value="Bacteria"/>
</dbReference>
<dbReference type="HOGENOM" id="CLU_007831_2_2_9"/>
<dbReference type="OrthoDB" id="9815560at2"/>
<dbReference type="Proteomes" id="UP000006371">
    <property type="component" value="Chromosome"/>
</dbReference>
<dbReference type="GO" id="GO:0005829">
    <property type="term" value="C:cytosol"/>
    <property type="evidence" value="ECO:0007669"/>
    <property type="project" value="TreeGrafter"/>
</dbReference>
<dbReference type="GO" id="GO:0050660">
    <property type="term" value="F:flavin adenine dinucleotide binding"/>
    <property type="evidence" value="ECO:0007669"/>
    <property type="project" value="UniProtKB-UniRule"/>
</dbReference>
<dbReference type="GO" id="GO:0030488">
    <property type="term" value="P:tRNA methylation"/>
    <property type="evidence" value="ECO:0007669"/>
    <property type="project" value="TreeGrafter"/>
</dbReference>
<dbReference type="GO" id="GO:0002098">
    <property type="term" value="P:tRNA wobble uridine modification"/>
    <property type="evidence" value="ECO:0007669"/>
    <property type="project" value="InterPro"/>
</dbReference>
<dbReference type="FunFam" id="1.10.10.1800:FF:000001">
    <property type="entry name" value="tRNA uridine 5-carboxymethylaminomethyl modification enzyme MnmG"/>
    <property type="match status" value="1"/>
</dbReference>
<dbReference type="FunFam" id="1.10.150.570:FF:000001">
    <property type="entry name" value="tRNA uridine 5-carboxymethylaminomethyl modification enzyme MnmG"/>
    <property type="match status" value="1"/>
</dbReference>
<dbReference type="FunFam" id="3.50.50.60:FF:000002">
    <property type="entry name" value="tRNA uridine 5-carboxymethylaminomethyl modification enzyme MnmG"/>
    <property type="match status" value="1"/>
</dbReference>
<dbReference type="FunFam" id="3.50.50.60:FF:000063">
    <property type="entry name" value="tRNA uridine 5-carboxymethylaminomethyl modification enzyme MnmG"/>
    <property type="match status" value="1"/>
</dbReference>
<dbReference type="Gene3D" id="3.50.50.60">
    <property type="entry name" value="FAD/NAD(P)-binding domain"/>
    <property type="match status" value="2"/>
</dbReference>
<dbReference type="Gene3D" id="1.10.150.570">
    <property type="entry name" value="GidA associated domain, C-terminal subdomain"/>
    <property type="match status" value="1"/>
</dbReference>
<dbReference type="Gene3D" id="1.10.10.1800">
    <property type="entry name" value="tRNA uridine 5-carboxymethylaminomethyl modification enzyme MnmG/GidA"/>
    <property type="match status" value="1"/>
</dbReference>
<dbReference type="HAMAP" id="MF_00129">
    <property type="entry name" value="MnmG_GidA"/>
    <property type="match status" value="1"/>
</dbReference>
<dbReference type="InterPro" id="IPR036188">
    <property type="entry name" value="FAD/NAD-bd_sf"/>
</dbReference>
<dbReference type="InterPro" id="IPR049312">
    <property type="entry name" value="GIDA_C_N"/>
</dbReference>
<dbReference type="InterPro" id="IPR004416">
    <property type="entry name" value="MnmG"/>
</dbReference>
<dbReference type="InterPro" id="IPR002218">
    <property type="entry name" value="MnmG-rel"/>
</dbReference>
<dbReference type="InterPro" id="IPR020595">
    <property type="entry name" value="MnmG-rel_CS"/>
</dbReference>
<dbReference type="InterPro" id="IPR026904">
    <property type="entry name" value="MnmG_C"/>
</dbReference>
<dbReference type="InterPro" id="IPR047001">
    <property type="entry name" value="MnmG_C_subdom"/>
</dbReference>
<dbReference type="InterPro" id="IPR044920">
    <property type="entry name" value="MnmG_C_subdom_sf"/>
</dbReference>
<dbReference type="InterPro" id="IPR040131">
    <property type="entry name" value="MnmG_N"/>
</dbReference>
<dbReference type="NCBIfam" id="TIGR00136">
    <property type="entry name" value="mnmG_gidA"/>
    <property type="match status" value="1"/>
</dbReference>
<dbReference type="PANTHER" id="PTHR11806">
    <property type="entry name" value="GLUCOSE INHIBITED DIVISION PROTEIN A"/>
    <property type="match status" value="1"/>
</dbReference>
<dbReference type="PANTHER" id="PTHR11806:SF0">
    <property type="entry name" value="PROTEIN MTO1 HOMOLOG, MITOCHONDRIAL"/>
    <property type="match status" value="1"/>
</dbReference>
<dbReference type="Pfam" id="PF01134">
    <property type="entry name" value="GIDA"/>
    <property type="match status" value="1"/>
</dbReference>
<dbReference type="Pfam" id="PF21680">
    <property type="entry name" value="GIDA_C_1st"/>
    <property type="match status" value="1"/>
</dbReference>
<dbReference type="Pfam" id="PF13932">
    <property type="entry name" value="SAM_GIDA_C"/>
    <property type="match status" value="1"/>
</dbReference>
<dbReference type="PRINTS" id="PR00411">
    <property type="entry name" value="PNDRDTASEI"/>
</dbReference>
<dbReference type="SMART" id="SM01228">
    <property type="entry name" value="GIDA_assoc_3"/>
    <property type="match status" value="1"/>
</dbReference>
<dbReference type="SUPFAM" id="SSF51905">
    <property type="entry name" value="FAD/NAD(P)-binding domain"/>
    <property type="match status" value="1"/>
</dbReference>
<dbReference type="PROSITE" id="PS01280">
    <property type="entry name" value="GIDA_1"/>
    <property type="match status" value="1"/>
</dbReference>
<dbReference type="PROSITE" id="PS01281">
    <property type="entry name" value="GIDA_2"/>
    <property type="match status" value="1"/>
</dbReference>
<organism>
    <name type="scientific">Staphylococcus saprophyticus subsp. saprophyticus (strain ATCC 15305 / DSM 20229 / NCIMB 8711 / NCTC 7292 / S-41)</name>
    <dbReference type="NCBI Taxonomy" id="342451"/>
    <lineage>
        <taxon>Bacteria</taxon>
        <taxon>Bacillati</taxon>
        <taxon>Bacillota</taxon>
        <taxon>Bacilli</taxon>
        <taxon>Bacillales</taxon>
        <taxon>Staphylococcaceae</taxon>
        <taxon>Staphylococcus</taxon>
    </lineage>
</organism>
<keyword id="KW-0963">Cytoplasm</keyword>
<keyword id="KW-0274">FAD</keyword>
<keyword id="KW-0285">Flavoprotein</keyword>
<keyword id="KW-0520">NAD</keyword>
<keyword id="KW-1185">Reference proteome</keyword>
<keyword id="KW-0819">tRNA processing</keyword>
<accession>Q49UI5</accession>
<name>MNMG_STAS1</name>
<feature type="chain" id="PRO_1000016686" description="tRNA uridine 5-carboxymethylaminomethyl modification enzyme MnmG">
    <location>
        <begin position="1"/>
        <end position="625"/>
    </location>
</feature>
<feature type="binding site" evidence="1">
    <location>
        <begin position="11"/>
        <end position="16"/>
    </location>
    <ligand>
        <name>FAD</name>
        <dbReference type="ChEBI" id="CHEBI:57692"/>
    </ligand>
</feature>
<feature type="binding site" evidence="1">
    <location>
        <position position="123"/>
    </location>
    <ligand>
        <name>FAD</name>
        <dbReference type="ChEBI" id="CHEBI:57692"/>
    </ligand>
</feature>
<feature type="binding site" evidence="1">
    <location>
        <position position="178"/>
    </location>
    <ligand>
        <name>FAD</name>
        <dbReference type="ChEBI" id="CHEBI:57692"/>
    </ligand>
</feature>
<feature type="binding site" evidence="1">
    <location>
        <begin position="270"/>
        <end position="284"/>
    </location>
    <ligand>
        <name>NAD(+)</name>
        <dbReference type="ChEBI" id="CHEBI:57540"/>
    </ligand>
</feature>
<feature type="binding site" evidence="1">
    <location>
        <position position="367"/>
    </location>
    <ligand>
        <name>FAD</name>
        <dbReference type="ChEBI" id="CHEBI:57692"/>
    </ligand>
</feature>
<sequence length="625" mass="69806">MAQEYDVIVIGAGHAGIEAGLASARRGAKTLMLTINLDNIAFMPCNPSVGGPAKGIVVREIDALGGQMAKTIDKTHIQMRMLNTGKGPAVRALRAQADKVLYQQEMKKVIEDEANLDIMQGMVDDLIIEDDVIKGVRTNIGTEYWSEAVIITTGTFLRGEIILGNMKYSSGPNHQLPSISLADNLRGLGFEVVRFKTGTPPRVNAKTIDYSKTEIQPGDDVGRAFSFETTEYILDQLPCWLTYTNGDTHQVIDDNLHLSAMYSGMIKGTGPRYCPSIEDKFVRFNDKPRHQLFLEPEGRNTNEVYVQGLSTSLPEHVQRQMLETIPGLEKADMMRAGYAIEYDALVPTQLWPTLETKKIKNLYTAGQINGTSGYEEAAGQGIMAGINAAARVQGKDEVILSRSDAYIGVLIDDLITKGTNEPYRLLTSRAEYRLLLRHDNADLRLTDLGYELGMISEERYARFNEKRAMIKAEQERLNGIRVKPNDRVQEIIEAQGGSRLKDGILALELLRRPEMTYDLILEILDESHQLPSDVEEQVEIQTKYEGYINKSLQQVEKVKRMEEKKIPEDLDYSKVDSLATEAREKLAEVKPLNIAQASRISGVNPADISILLVYLEQGKIQRVNN</sequence>
<gene>
    <name evidence="1" type="primary">mnmG</name>
    <name evidence="1" type="synonym">gidA</name>
    <name type="ordered locus">SSP2443</name>
</gene>
<comment type="function">
    <text evidence="1">NAD-binding protein involved in the addition of a carboxymethylaminomethyl (cmnm) group at the wobble position (U34) of certain tRNAs, forming tRNA-cmnm(5)s(2)U34.</text>
</comment>
<comment type="cofactor">
    <cofactor evidence="1">
        <name>FAD</name>
        <dbReference type="ChEBI" id="CHEBI:57692"/>
    </cofactor>
</comment>
<comment type="subunit">
    <text evidence="1">Homodimer. Heterotetramer of two MnmE and two MnmG subunits.</text>
</comment>
<comment type="subcellular location">
    <subcellularLocation>
        <location evidence="1">Cytoplasm</location>
    </subcellularLocation>
</comment>
<comment type="similarity">
    <text evidence="1">Belongs to the MnmG family.</text>
</comment>
<evidence type="ECO:0000255" key="1">
    <source>
        <dbReference type="HAMAP-Rule" id="MF_00129"/>
    </source>
</evidence>
<protein>
    <recommendedName>
        <fullName evidence="1">tRNA uridine 5-carboxymethylaminomethyl modification enzyme MnmG</fullName>
    </recommendedName>
    <alternativeName>
        <fullName evidence="1">Glucose-inhibited division protein A</fullName>
    </alternativeName>
</protein>
<reference key="1">
    <citation type="journal article" date="2005" name="Proc. Natl. Acad. Sci. U.S.A.">
        <title>Whole genome sequence of Staphylococcus saprophyticus reveals the pathogenesis of uncomplicated urinary tract infection.</title>
        <authorList>
            <person name="Kuroda M."/>
            <person name="Yamashita A."/>
            <person name="Hirakawa H."/>
            <person name="Kumano M."/>
            <person name="Morikawa K."/>
            <person name="Higashide M."/>
            <person name="Maruyama A."/>
            <person name="Inose Y."/>
            <person name="Matoba K."/>
            <person name="Toh H."/>
            <person name="Kuhara S."/>
            <person name="Hattori M."/>
            <person name="Ohta T."/>
        </authorList>
    </citation>
    <scope>NUCLEOTIDE SEQUENCE [LARGE SCALE GENOMIC DNA]</scope>
    <source>
        <strain>ATCC 15305 / DSM 20229 / NCIMB 8711 / NCTC 7292 / S-41</strain>
    </source>
</reference>